<organism>
    <name type="scientific">Streptococcus pneumoniae (strain CGSP14)</name>
    <dbReference type="NCBI Taxonomy" id="516950"/>
    <lineage>
        <taxon>Bacteria</taxon>
        <taxon>Bacillati</taxon>
        <taxon>Bacillota</taxon>
        <taxon>Bacilli</taxon>
        <taxon>Lactobacillales</taxon>
        <taxon>Streptococcaceae</taxon>
        <taxon>Streptococcus</taxon>
    </lineage>
</organism>
<comment type="function">
    <text evidence="1">The RuvA-RuvB-RuvC complex processes Holliday junction (HJ) DNA during genetic recombination and DNA repair, while the RuvA-RuvB complex plays an important role in the rescue of blocked DNA replication forks via replication fork reversal (RFR). RuvA specifically binds to HJ cruciform DNA, conferring on it an open structure. The RuvB hexamer acts as an ATP-dependent pump, pulling dsDNA into and through the RuvAB complex. RuvB forms 2 homohexamers on either side of HJ DNA bound by 1 or 2 RuvA tetramers; 4 subunits per hexamer contact DNA at a time. Coordinated motions by a converter formed by DNA-disengaged RuvB subunits stimulates ATP hydrolysis and nucleotide exchange. Immobilization of the converter enables RuvB to convert the ATP-contained energy into a lever motion, pulling 2 nucleotides of DNA out of the RuvA tetramer per ATP hydrolyzed, thus driving DNA branch migration. The RuvB motors rotate together with the DNA substrate, which together with the progressing nucleotide cycle form the mechanistic basis for DNA recombination by continuous HJ branch migration. Branch migration allows RuvC to scan DNA until it finds its consensus sequence, where it cleaves and resolves cruciform DNA.</text>
</comment>
<comment type="catalytic activity">
    <reaction evidence="1">
        <text>ATP + H2O = ADP + phosphate + H(+)</text>
        <dbReference type="Rhea" id="RHEA:13065"/>
        <dbReference type="ChEBI" id="CHEBI:15377"/>
        <dbReference type="ChEBI" id="CHEBI:15378"/>
        <dbReference type="ChEBI" id="CHEBI:30616"/>
        <dbReference type="ChEBI" id="CHEBI:43474"/>
        <dbReference type="ChEBI" id="CHEBI:456216"/>
    </reaction>
</comment>
<comment type="subunit">
    <text evidence="1">Homohexamer. Forms an RuvA(8)-RuvB(12)-Holliday junction (HJ) complex. HJ DNA is sandwiched between 2 RuvA tetramers; dsDNA enters through RuvA and exits via RuvB. An RuvB hexamer assembles on each DNA strand where it exits the tetramer. Each RuvB hexamer is contacted by two RuvA subunits (via domain III) on 2 adjacent RuvB subunits; this complex drives branch migration. In the full resolvosome a probable DNA-RuvA(4)-RuvB(12)-RuvC(2) complex forms which resolves the HJ.</text>
</comment>
<comment type="subcellular location">
    <subcellularLocation>
        <location evidence="1">Cytoplasm</location>
    </subcellularLocation>
</comment>
<comment type="domain">
    <text evidence="1">Has 3 domains, the large (RuvB-L) and small ATPase (RuvB-S) domains and the C-terminal head (RuvB-H) domain. The head domain binds DNA, while the ATPase domains jointly bind ATP, ADP or are empty depending on the state of the subunit in the translocation cycle. During a single DNA translocation step the structure of each domain remains the same, but their relative positions change.</text>
</comment>
<comment type="similarity">
    <text evidence="1">Belongs to the RuvB family.</text>
</comment>
<keyword id="KW-0067">ATP-binding</keyword>
<keyword id="KW-0963">Cytoplasm</keyword>
<keyword id="KW-0227">DNA damage</keyword>
<keyword id="KW-0233">DNA recombination</keyword>
<keyword id="KW-0234">DNA repair</keyword>
<keyword id="KW-0238">DNA-binding</keyword>
<keyword id="KW-0378">Hydrolase</keyword>
<keyword id="KW-0547">Nucleotide-binding</keyword>
<evidence type="ECO:0000255" key="1">
    <source>
        <dbReference type="HAMAP-Rule" id="MF_00016"/>
    </source>
</evidence>
<gene>
    <name evidence="1" type="primary">ruvB</name>
    <name type="ordered locus">SPCG_0269</name>
</gene>
<dbReference type="EC" id="3.6.4.-" evidence="1"/>
<dbReference type="EMBL" id="CP001033">
    <property type="protein sequence ID" value="ACB89521.1"/>
    <property type="molecule type" value="Genomic_DNA"/>
</dbReference>
<dbReference type="SMR" id="B2ISI4"/>
<dbReference type="KEGG" id="spw:SPCG_0269"/>
<dbReference type="HOGENOM" id="CLU_055599_1_0_9"/>
<dbReference type="GO" id="GO:0005737">
    <property type="term" value="C:cytoplasm"/>
    <property type="evidence" value="ECO:0007669"/>
    <property type="project" value="UniProtKB-SubCell"/>
</dbReference>
<dbReference type="GO" id="GO:0048476">
    <property type="term" value="C:Holliday junction resolvase complex"/>
    <property type="evidence" value="ECO:0007669"/>
    <property type="project" value="UniProtKB-UniRule"/>
</dbReference>
<dbReference type="GO" id="GO:0005524">
    <property type="term" value="F:ATP binding"/>
    <property type="evidence" value="ECO:0007669"/>
    <property type="project" value="UniProtKB-UniRule"/>
</dbReference>
<dbReference type="GO" id="GO:0016887">
    <property type="term" value="F:ATP hydrolysis activity"/>
    <property type="evidence" value="ECO:0007669"/>
    <property type="project" value="InterPro"/>
</dbReference>
<dbReference type="GO" id="GO:0000400">
    <property type="term" value="F:four-way junction DNA binding"/>
    <property type="evidence" value="ECO:0007669"/>
    <property type="project" value="UniProtKB-UniRule"/>
</dbReference>
<dbReference type="GO" id="GO:0009378">
    <property type="term" value="F:four-way junction helicase activity"/>
    <property type="evidence" value="ECO:0007669"/>
    <property type="project" value="InterPro"/>
</dbReference>
<dbReference type="GO" id="GO:0006310">
    <property type="term" value="P:DNA recombination"/>
    <property type="evidence" value="ECO:0007669"/>
    <property type="project" value="UniProtKB-UniRule"/>
</dbReference>
<dbReference type="GO" id="GO:0006281">
    <property type="term" value="P:DNA repair"/>
    <property type="evidence" value="ECO:0007669"/>
    <property type="project" value="UniProtKB-UniRule"/>
</dbReference>
<dbReference type="CDD" id="cd00009">
    <property type="entry name" value="AAA"/>
    <property type="match status" value="1"/>
</dbReference>
<dbReference type="Gene3D" id="1.10.8.60">
    <property type="match status" value="1"/>
</dbReference>
<dbReference type="Gene3D" id="3.40.50.300">
    <property type="entry name" value="P-loop containing nucleotide triphosphate hydrolases"/>
    <property type="match status" value="1"/>
</dbReference>
<dbReference type="Gene3D" id="1.10.10.10">
    <property type="entry name" value="Winged helix-like DNA-binding domain superfamily/Winged helix DNA-binding domain"/>
    <property type="match status" value="1"/>
</dbReference>
<dbReference type="HAMAP" id="MF_00016">
    <property type="entry name" value="DNA_HJ_migration_RuvB"/>
    <property type="match status" value="1"/>
</dbReference>
<dbReference type="InterPro" id="IPR003593">
    <property type="entry name" value="AAA+_ATPase"/>
</dbReference>
<dbReference type="InterPro" id="IPR041445">
    <property type="entry name" value="AAA_lid_4"/>
</dbReference>
<dbReference type="InterPro" id="IPR004605">
    <property type="entry name" value="DNA_helicase_Holl-junc_RuvB"/>
</dbReference>
<dbReference type="InterPro" id="IPR027417">
    <property type="entry name" value="P-loop_NTPase"/>
</dbReference>
<dbReference type="InterPro" id="IPR008824">
    <property type="entry name" value="RuvB-like_N"/>
</dbReference>
<dbReference type="InterPro" id="IPR008823">
    <property type="entry name" value="RuvB_C"/>
</dbReference>
<dbReference type="InterPro" id="IPR036388">
    <property type="entry name" value="WH-like_DNA-bd_sf"/>
</dbReference>
<dbReference type="InterPro" id="IPR036390">
    <property type="entry name" value="WH_DNA-bd_sf"/>
</dbReference>
<dbReference type="NCBIfam" id="NF000868">
    <property type="entry name" value="PRK00080.1"/>
    <property type="match status" value="1"/>
</dbReference>
<dbReference type="NCBIfam" id="TIGR00635">
    <property type="entry name" value="ruvB"/>
    <property type="match status" value="1"/>
</dbReference>
<dbReference type="PANTHER" id="PTHR42848">
    <property type="match status" value="1"/>
</dbReference>
<dbReference type="PANTHER" id="PTHR42848:SF1">
    <property type="entry name" value="HOLLIDAY JUNCTION BRANCH MIGRATION COMPLEX SUBUNIT RUVB"/>
    <property type="match status" value="1"/>
</dbReference>
<dbReference type="Pfam" id="PF17864">
    <property type="entry name" value="AAA_lid_4"/>
    <property type="match status" value="1"/>
</dbReference>
<dbReference type="Pfam" id="PF05491">
    <property type="entry name" value="RuvB_C"/>
    <property type="match status" value="1"/>
</dbReference>
<dbReference type="Pfam" id="PF05496">
    <property type="entry name" value="RuvB_N"/>
    <property type="match status" value="1"/>
</dbReference>
<dbReference type="SMART" id="SM00382">
    <property type="entry name" value="AAA"/>
    <property type="match status" value="1"/>
</dbReference>
<dbReference type="SUPFAM" id="SSF52540">
    <property type="entry name" value="P-loop containing nucleoside triphosphate hydrolases"/>
    <property type="match status" value="1"/>
</dbReference>
<dbReference type="SUPFAM" id="SSF46785">
    <property type="entry name" value="Winged helix' DNA-binding domain"/>
    <property type="match status" value="1"/>
</dbReference>
<reference key="1">
    <citation type="journal article" date="2009" name="BMC Genomics">
        <title>Genome evolution driven by host adaptations results in a more virulent and antimicrobial-resistant Streptococcus pneumoniae serotype 14.</title>
        <authorList>
            <person name="Ding F."/>
            <person name="Tang P."/>
            <person name="Hsu M.-H."/>
            <person name="Cui P."/>
            <person name="Hu S."/>
            <person name="Yu J."/>
            <person name="Chiu C.-H."/>
        </authorList>
    </citation>
    <scope>NUCLEOTIDE SEQUENCE [LARGE SCALE GENOMIC DNA]</scope>
    <source>
        <strain>CGSP14</strain>
    </source>
</reference>
<accession>B2ISI4</accession>
<name>RUVB_STRPS</name>
<proteinExistence type="inferred from homology"/>
<sequence length="332" mass="37272">MSRILDNEIMGDEELVERTLRPQYLREYIGQDKVKDQLQIFIEAAKMRDEALDHVLLFGPPGLGKTTMAFVIANELGVNLKQTSGPVIEKAGDLVAILNELEPGDVLFIDEIHRLPMSVEEVLYSAMEDFYIDIMIGAGEGSRSVHLELPPFTLIGATTRAGMLSNPLRARFGITGHMEYYAHADLTEIVERTADIFEMEITHEAASELALRSRGTPRIANRLLKRVRDFAQIVGNGVIDDVITDKALTMLDVDHEGLDYVDQKILRTMIEMYGGGPVGLGTLSVNIAEERETVEDMYEPYLIQKGFIMRTRSGRMATAKAYEHLGYEYNEK</sequence>
<protein>
    <recommendedName>
        <fullName evidence="1">Holliday junction branch migration complex subunit RuvB</fullName>
        <ecNumber evidence="1">3.6.4.-</ecNumber>
    </recommendedName>
</protein>
<feature type="chain" id="PRO_1000089685" description="Holliday junction branch migration complex subunit RuvB">
    <location>
        <begin position="1"/>
        <end position="332"/>
    </location>
</feature>
<feature type="region of interest" description="Large ATPase domain (RuvB-L)" evidence="1">
    <location>
        <begin position="1"/>
        <end position="181"/>
    </location>
</feature>
<feature type="region of interest" description="Small ATPAse domain (RuvB-S)" evidence="1">
    <location>
        <begin position="182"/>
        <end position="252"/>
    </location>
</feature>
<feature type="region of interest" description="Head domain (RuvB-H)" evidence="1">
    <location>
        <begin position="255"/>
        <end position="332"/>
    </location>
</feature>
<feature type="binding site" evidence="1">
    <location>
        <position position="20"/>
    </location>
    <ligand>
        <name>ATP</name>
        <dbReference type="ChEBI" id="CHEBI:30616"/>
    </ligand>
</feature>
<feature type="binding site" evidence="1">
    <location>
        <position position="21"/>
    </location>
    <ligand>
        <name>ATP</name>
        <dbReference type="ChEBI" id="CHEBI:30616"/>
    </ligand>
</feature>
<feature type="binding site" evidence="1">
    <location>
        <position position="62"/>
    </location>
    <ligand>
        <name>ATP</name>
        <dbReference type="ChEBI" id="CHEBI:30616"/>
    </ligand>
</feature>
<feature type="binding site" evidence="1">
    <location>
        <position position="65"/>
    </location>
    <ligand>
        <name>ATP</name>
        <dbReference type="ChEBI" id="CHEBI:30616"/>
    </ligand>
</feature>
<feature type="binding site" evidence="1">
    <location>
        <position position="66"/>
    </location>
    <ligand>
        <name>ATP</name>
        <dbReference type="ChEBI" id="CHEBI:30616"/>
    </ligand>
</feature>
<feature type="binding site" evidence="1">
    <location>
        <position position="66"/>
    </location>
    <ligand>
        <name>Mg(2+)</name>
        <dbReference type="ChEBI" id="CHEBI:18420"/>
    </ligand>
</feature>
<feature type="binding site" evidence="1">
    <location>
        <position position="67"/>
    </location>
    <ligand>
        <name>ATP</name>
        <dbReference type="ChEBI" id="CHEBI:30616"/>
    </ligand>
</feature>
<feature type="binding site" evidence="1">
    <location>
        <begin position="128"/>
        <end position="130"/>
    </location>
    <ligand>
        <name>ATP</name>
        <dbReference type="ChEBI" id="CHEBI:30616"/>
    </ligand>
</feature>
<feature type="binding site" evidence="1">
    <location>
        <position position="171"/>
    </location>
    <ligand>
        <name>ATP</name>
        <dbReference type="ChEBI" id="CHEBI:30616"/>
    </ligand>
</feature>
<feature type="binding site" evidence="1">
    <location>
        <position position="181"/>
    </location>
    <ligand>
        <name>ATP</name>
        <dbReference type="ChEBI" id="CHEBI:30616"/>
    </ligand>
</feature>
<feature type="binding site" evidence="1">
    <location>
        <position position="218"/>
    </location>
    <ligand>
        <name>ATP</name>
        <dbReference type="ChEBI" id="CHEBI:30616"/>
    </ligand>
</feature>
<feature type="binding site" evidence="1">
    <location>
        <position position="291"/>
    </location>
    <ligand>
        <name>DNA</name>
        <dbReference type="ChEBI" id="CHEBI:16991"/>
    </ligand>
</feature>
<feature type="binding site" evidence="1">
    <location>
        <position position="310"/>
    </location>
    <ligand>
        <name>DNA</name>
        <dbReference type="ChEBI" id="CHEBI:16991"/>
    </ligand>
</feature>
<feature type="binding site" evidence="1">
    <location>
        <position position="312"/>
    </location>
    <ligand>
        <name>DNA</name>
        <dbReference type="ChEBI" id="CHEBI:16991"/>
    </ligand>
</feature>
<feature type="binding site" evidence="1">
    <location>
        <position position="315"/>
    </location>
    <ligand>
        <name>DNA</name>
        <dbReference type="ChEBI" id="CHEBI:16991"/>
    </ligand>
</feature>